<feature type="chain" id="PRO_0000172675" description="Phosphatidylglycerol--prolipoprotein diacylglyceryl transferase">
    <location>
        <begin position="1"/>
        <end position="280"/>
    </location>
</feature>
<feature type="transmembrane region" description="Helical" evidence="1">
    <location>
        <begin position="19"/>
        <end position="39"/>
    </location>
</feature>
<feature type="transmembrane region" description="Helical" evidence="1">
    <location>
        <begin position="56"/>
        <end position="76"/>
    </location>
</feature>
<feature type="transmembrane region" description="Helical" evidence="1">
    <location>
        <begin position="90"/>
        <end position="110"/>
    </location>
</feature>
<feature type="transmembrane region" description="Helical" evidence="1">
    <location>
        <begin position="204"/>
        <end position="224"/>
    </location>
</feature>
<feature type="transmembrane region" description="Helical" evidence="1">
    <location>
        <begin position="236"/>
        <end position="256"/>
    </location>
</feature>
<feature type="binding site" evidence="1">
    <location>
        <position position="138"/>
    </location>
    <ligand>
        <name>a 1,2-diacyl-sn-glycero-3-phospho-(1'-sn-glycerol)</name>
        <dbReference type="ChEBI" id="CHEBI:64716"/>
    </ligand>
</feature>
<gene>
    <name evidence="1" type="primary">lgt</name>
    <name type="ordered locus">SAR0815</name>
</gene>
<accession>Q6GIN0</accession>
<comment type="function">
    <text evidence="1">Catalyzes the transfer of the diacylglyceryl group from phosphatidylglycerol to the sulfhydryl group of the N-terminal cysteine of a prolipoprotein, the first step in the formation of mature lipoproteins.</text>
</comment>
<comment type="catalytic activity">
    <reaction evidence="1">
        <text>L-cysteinyl-[prolipoprotein] + a 1,2-diacyl-sn-glycero-3-phospho-(1'-sn-glycerol) = an S-1,2-diacyl-sn-glyceryl-L-cysteinyl-[prolipoprotein] + sn-glycerol 1-phosphate + H(+)</text>
        <dbReference type="Rhea" id="RHEA:56712"/>
        <dbReference type="Rhea" id="RHEA-COMP:14679"/>
        <dbReference type="Rhea" id="RHEA-COMP:14680"/>
        <dbReference type="ChEBI" id="CHEBI:15378"/>
        <dbReference type="ChEBI" id="CHEBI:29950"/>
        <dbReference type="ChEBI" id="CHEBI:57685"/>
        <dbReference type="ChEBI" id="CHEBI:64716"/>
        <dbReference type="ChEBI" id="CHEBI:140658"/>
        <dbReference type="EC" id="2.5.1.145"/>
    </reaction>
</comment>
<comment type="pathway">
    <text evidence="1">Protein modification; lipoprotein biosynthesis (diacylglyceryl transfer).</text>
</comment>
<comment type="subcellular location">
    <subcellularLocation>
        <location evidence="1">Cell membrane</location>
        <topology evidence="1">Multi-pass membrane protein</topology>
    </subcellularLocation>
</comment>
<comment type="similarity">
    <text evidence="1">Belongs to the Lgt family.</text>
</comment>
<protein>
    <recommendedName>
        <fullName evidence="1">Phosphatidylglycerol--prolipoprotein diacylglyceryl transferase</fullName>
        <ecNumber evidence="1">2.5.1.145</ecNumber>
    </recommendedName>
</protein>
<keyword id="KW-1003">Cell membrane</keyword>
<keyword id="KW-0472">Membrane</keyword>
<keyword id="KW-0808">Transferase</keyword>
<keyword id="KW-0812">Transmembrane</keyword>
<keyword id="KW-1133">Transmembrane helix</keyword>
<name>LGT_STAAR</name>
<dbReference type="EC" id="2.5.1.145" evidence="1"/>
<dbReference type="EMBL" id="BX571856">
    <property type="protein sequence ID" value="CAG39825.1"/>
    <property type="molecule type" value="Genomic_DNA"/>
</dbReference>
<dbReference type="RefSeq" id="WP_000508984.1">
    <property type="nucleotide sequence ID" value="NC_002952.2"/>
</dbReference>
<dbReference type="SMR" id="Q6GIN0"/>
<dbReference type="KEGG" id="sar:SAR0815"/>
<dbReference type="HOGENOM" id="CLU_013386_0_1_9"/>
<dbReference type="UniPathway" id="UPA00664"/>
<dbReference type="Proteomes" id="UP000000596">
    <property type="component" value="Chromosome"/>
</dbReference>
<dbReference type="GO" id="GO:0005886">
    <property type="term" value="C:plasma membrane"/>
    <property type="evidence" value="ECO:0007669"/>
    <property type="project" value="UniProtKB-SubCell"/>
</dbReference>
<dbReference type="GO" id="GO:0008961">
    <property type="term" value="F:phosphatidylglycerol-prolipoprotein diacylglyceryl transferase activity"/>
    <property type="evidence" value="ECO:0007669"/>
    <property type="project" value="UniProtKB-UniRule"/>
</dbReference>
<dbReference type="GO" id="GO:0042158">
    <property type="term" value="P:lipoprotein biosynthetic process"/>
    <property type="evidence" value="ECO:0007669"/>
    <property type="project" value="UniProtKB-UniRule"/>
</dbReference>
<dbReference type="HAMAP" id="MF_01147">
    <property type="entry name" value="Lgt"/>
    <property type="match status" value="1"/>
</dbReference>
<dbReference type="InterPro" id="IPR001640">
    <property type="entry name" value="Lgt"/>
</dbReference>
<dbReference type="NCBIfam" id="TIGR00544">
    <property type="entry name" value="lgt"/>
    <property type="match status" value="1"/>
</dbReference>
<dbReference type="PANTHER" id="PTHR30589:SF0">
    <property type="entry name" value="PHOSPHATIDYLGLYCEROL--PROLIPOPROTEIN DIACYLGLYCERYL TRANSFERASE"/>
    <property type="match status" value="1"/>
</dbReference>
<dbReference type="PANTHER" id="PTHR30589">
    <property type="entry name" value="PROLIPOPROTEIN DIACYLGLYCERYL TRANSFERASE"/>
    <property type="match status" value="1"/>
</dbReference>
<dbReference type="Pfam" id="PF01790">
    <property type="entry name" value="LGT"/>
    <property type="match status" value="1"/>
</dbReference>
<dbReference type="PROSITE" id="PS01311">
    <property type="entry name" value="LGT"/>
    <property type="match status" value="1"/>
</dbReference>
<reference key="1">
    <citation type="journal article" date="2004" name="Proc. Natl. Acad. Sci. U.S.A.">
        <title>Complete genomes of two clinical Staphylococcus aureus strains: evidence for the rapid evolution of virulence and drug resistance.</title>
        <authorList>
            <person name="Holden M.T.G."/>
            <person name="Feil E.J."/>
            <person name="Lindsay J.A."/>
            <person name="Peacock S.J."/>
            <person name="Day N.P.J."/>
            <person name="Enright M.C."/>
            <person name="Foster T.J."/>
            <person name="Moore C.E."/>
            <person name="Hurst L."/>
            <person name="Atkin R."/>
            <person name="Barron A."/>
            <person name="Bason N."/>
            <person name="Bentley S.D."/>
            <person name="Chillingworth C."/>
            <person name="Chillingworth T."/>
            <person name="Churcher C."/>
            <person name="Clark L."/>
            <person name="Corton C."/>
            <person name="Cronin A."/>
            <person name="Doggett J."/>
            <person name="Dowd L."/>
            <person name="Feltwell T."/>
            <person name="Hance Z."/>
            <person name="Harris B."/>
            <person name="Hauser H."/>
            <person name="Holroyd S."/>
            <person name="Jagels K."/>
            <person name="James K.D."/>
            <person name="Lennard N."/>
            <person name="Line A."/>
            <person name="Mayes R."/>
            <person name="Moule S."/>
            <person name="Mungall K."/>
            <person name="Ormond D."/>
            <person name="Quail M.A."/>
            <person name="Rabbinowitsch E."/>
            <person name="Rutherford K.M."/>
            <person name="Sanders M."/>
            <person name="Sharp S."/>
            <person name="Simmonds M."/>
            <person name="Stevens K."/>
            <person name="Whitehead S."/>
            <person name="Barrell B.G."/>
            <person name="Spratt B.G."/>
            <person name="Parkhill J."/>
        </authorList>
    </citation>
    <scope>NUCLEOTIDE SEQUENCE [LARGE SCALE GENOMIC DNA]</scope>
    <source>
        <strain>MRSA252</strain>
    </source>
</reference>
<evidence type="ECO:0000255" key="1">
    <source>
        <dbReference type="HAMAP-Rule" id="MF_01147"/>
    </source>
</evidence>
<organism>
    <name type="scientific">Staphylococcus aureus (strain MRSA252)</name>
    <dbReference type="NCBI Taxonomy" id="282458"/>
    <lineage>
        <taxon>Bacteria</taxon>
        <taxon>Bacillati</taxon>
        <taxon>Bacillota</taxon>
        <taxon>Bacilli</taxon>
        <taxon>Bacillales</taxon>
        <taxon>Staphylococcaceae</taxon>
        <taxon>Staphylococcus</taxon>
    </lineage>
</organism>
<sequence length="280" mass="31637">MGGIVFNYIDPVAFNLGPLSVRWYGIIIAVGILLGYFVAQRALVKAGLHKDTLVDIIFYSALFGFIAARIYFVIFQWPYYAENPGEIIKIWHGGIAIHGGLIGGFIAGVIVCKVKNLNPFQIGDIVAPSIILAQGIGRWGNFMNHEAHGGPVSRAFLEQLHLPNFIIENMYINGQYYHPTFLYESIWDVAGFIILVNIRKHLKLGETFFLYLTWYSIGRFFIEGLRTDSLMLTSNIRVAQLVSILLILISISLIVYRRIKYNPPLYSKVGALPWPTRKVK</sequence>
<proteinExistence type="inferred from homology"/>